<dbReference type="EMBL" id="CP000058">
    <property type="protein sequence ID" value="AAZ35290.1"/>
    <property type="molecule type" value="Genomic_DNA"/>
</dbReference>
<dbReference type="RefSeq" id="WP_002555498.1">
    <property type="nucleotide sequence ID" value="NC_005773.3"/>
</dbReference>
<dbReference type="GeneID" id="77280383"/>
<dbReference type="KEGG" id="psp:PSPPH_4601"/>
<dbReference type="eggNOG" id="COG0244">
    <property type="taxonomic scope" value="Bacteria"/>
</dbReference>
<dbReference type="HOGENOM" id="CLU_092227_0_2_6"/>
<dbReference type="Proteomes" id="UP000000551">
    <property type="component" value="Chromosome"/>
</dbReference>
<dbReference type="GO" id="GO:0015934">
    <property type="term" value="C:large ribosomal subunit"/>
    <property type="evidence" value="ECO:0007669"/>
    <property type="project" value="InterPro"/>
</dbReference>
<dbReference type="GO" id="GO:0070180">
    <property type="term" value="F:large ribosomal subunit rRNA binding"/>
    <property type="evidence" value="ECO:0007669"/>
    <property type="project" value="UniProtKB-UniRule"/>
</dbReference>
<dbReference type="GO" id="GO:0003735">
    <property type="term" value="F:structural constituent of ribosome"/>
    <property type="evidence" value="ECO:0007669"/>
    <property type="project" value="InterPro"/>
</dbReference>
<dbReference type="GO" id="GO:0006412">
    <property type="term" value="P:translation"/>
    <property type="evidence" value="ECO:0007669"/>
    <property type="project" value="UniProtKB-UniRule"/>
</dbReference>
<dbReference type="CDD" id="cd05797">
    <property type="entry name" value="Ribosomal_L10"/>
    <property type="match status" value="1"/>
</dbReference>
<dbReference type="FunFam" id="3.30.70.1730:FF:000001">
    <property type="entry name" value="50S ribosomal protein L10"/>
    <property type="match status" value="1"/>
</dbReference>
<dbReference type="Gene3D" id="3.30.70.1730">
    <property type="match status" value="1"/>
</dbReference>
<dbReference type="Gene3D" id="6.10.250.2350">
    <property type="match status" value="1"/>
</dbReference>
<dbReference type="HAMAP" id="MF_00362">
    <property type="entry name" value="Ribosomal_uL10"/>
    <property type="match status" value="1"/>
</dbReference>
<dbReference type="InterPro" id="IPR001790">
    <property type="entry name" value="Ribosomal_uL10"/>
</dbReference>
<dbReference type="InterPro" id="IPR043141">
    <property type="entry name" value="Ribosomal_uL10-like_sf"/>
</dbReference>
<dbReference type="InterPro" id="IPR022973">
    <property type="entry name" value="Ribosomal_uL10_bac"/>
</dbReference>
<dbReference type="InterPro" id="IPR047865">
    <property type="entry name" value="Ribosomal_uL10_bac_type"/>
</dbReference>
<dbReference type="InterPro" id="IPR002363">
    <property type="entry name" value="Ribosomal_uL10_CS_bac"/>
</dbReference>
<dbReference type="NCBIfam" id="NF000955">
    <property type="entry name" value="PRK00099.1-1"/>
    <property type="match status" value="1"/>
</dbReference>
<dbReference type="PANTHER" id="PTHR11560">
    <property type="entry name" value="39S RIBOSOMAL PROTEIN L10, MITOCHONDRIAL"/>
    <property type="match status" value="1"/>
</dbReference>
<dbReference type="Pfam" id="PF00466">
    <property type="entry name" value="Ribosomal_L10"/>
    <property type="match status" value="1"/>
</dbReference>
<dbReference type="SUPFAM" id="SSF160369">
    <property type="entry name" value="Ribosomal protein L10-like"/>
    <property type="match status" value="1"/>
</dbReference>
<dbReference type="PROSITE" id="PS01109">
    <property type="entry name" value="RIBOSOMAL_L10"/>
    <property type="match status" value="1"/>
</dbReference>
<comment type="function">
    <text evidence="1">Forms part of the ribosomal stalk, playing a central role in the interaction of the ribosome with GTP-bound translation factors.</text>
</comment>
<comment type="subunit">
    <text evidence="1">Part of the ribosomal stalk of the 50S ribosomal subunit. The N-terminus interacts with L11 and the large rRNA to form the base of the stalk. The C-terminus forms an elongated spine to which L12 dimers bind in a sequential fashion forming a multimeric L10(L12)X complex.</text>
</comment>
<comment type="similarity">
    <text evidence="1">Belongs to the universal ribosomal protein uL10 family.</text>
</comment>
<feature type="chain" id="PRO_0000234875" description="Large ribosomal subunit protein uL10">
    <location>
        <begin position="1"/>
        <end position="166"/>
    </location>
</feature>
<keyword id="KW-0687">Ribonucleoprotein</keyword>
<keyword id="KW-0689">Ribosomal protein</keyword>
<keyword id="KW-0694">RNA-binding</keyword>
<keyword id="KW-0699">rRNA-binding</keyword>
<evidence type="ECO:0000255" key="1">
    <source>
        <dbReference type="HAMAP-Rule" id="MF_00362"/>
    </source>
</evidence>
<evidence type="ECO:0000305" key="2"/>
<name>RL10_PSE14</name>
<gene>
    <name evidence="1" type="primary">rplJ</name>
    <name type="ordered locus">PSPPH_4601</name>
</gene>
<organism>
    <name type="scientific">Pseudomonas savastanoi pv. phaseolicola (strain 1448A / Race 6)</name>
    <name type="common">Pseudomonas syringae pv. phaseolicola (strain 1448A / Race 6)</name>
    <dbReference type="NCBI Taxonomy" id="264730"/>
    <lineage>
        <taxon>Bacteria</taxon>
        <taxon>Pseudomonadati</taxon>
        <taxon>Pseudomonadota</taxon>
        <taxon>Gammaproteobacteria</taxon>
        <taxon>Pseudomonadales</taxon>
        <taxon>Pseudomonadaceae</taxon>
        <taxon>Pseudomonas</taxon>
    </lineage>
</organism>
<accession>Q48D27</accession>
<protein>
    <recommendedName>
        <fullName evidence="1">Large ribosomal subunit protein uL10</fullName>
    </recommendedName>
    <alternativeName>
        <fullName evidence="2">50S ribosomal protein L10</fullName>
    </alternativeName>
</protein>
<sequence>MAIKLEDKKAIVAEVNEAAKAGLSAVVADARGVTVGAMTGLRKEAREAGVYVRVVRNTLLKRAVADTEFSVLNDVFTGPTLIAFSNEHPGAAARLFKEFAKGQDKFEIKAAAFEGKFLAANQIDVLASLPTRNEAISQLMSVIQGATSKLARTLAAVRDQKEAAAA</sequence>
<reference key="1">
    <citation type="journal article" date="2005" name="J. Bacteriol.">
        <title>Whole-genome sequence analysis of Pseudomonas syringae pv. phaseolicola 1448A reveals divergence among pathovars in genes involved in virulence and transposition.</title>
        <authorList>
            <person name="Joardar V."/>
            <person name="Lindeberg M."/>
            <person name="Jackson R.W."/>
            <person name="Selengut J."/>
            <person name="Dodson R."/>
            <person name="Brinkac L.M."/>
            <person name="Daugherty S.C."/>
            <person name="DeBoy R.T."/>
            <person name="Durkin A.S."/>
            <person name="Gwinn Giglio M."/>
            <person name="Madupu R."/>
            <person name="Nelson W.C."/>
            <person name="Rosovitz M.J."/>
            <person name="Sullivan S.A."/>
            <person name="Crabtree J."/>
            <person name="Creasy T."/>
            <person name="Davidsen T.M."/>
            <person name="Haft D.H."/>
            <person name="Zafar N."/>
            <person name="Zhou L."/>
            <person name="Halpin R."/>
            <person name="Holley T."/>
            <person name="Khouri H.M."/>
            <person name="Feldblyum T.V."/>
            <person name="White O."/>
            <person name="Fraser C.M."/>
            <person name="Chatterjee A.K."/>
            <person name="Cartinhour S."/>
            <person name="Schneider D."/>
            <person name="Mansfield J.W."/>
            <person name="Collmer A."/>
            <person name="Buell R."/>
        </authorList>
    </citation>
    <scope>NUCLEOTIDE SEQUENCE [LARGE SCALE GENOMIC DNA]</scope>
    <source>
        <strain>1448A / Race 6</strain>
    </source>
</reference>
<proteinExistence type="inferred from homology"/>